<comment type="function">
    <text evidence="1">Required for the formation of a threonylcarbamoyl group on adenosine at position 37 (t(6)A37) in tRNAs that read codons beginning with adenine. Is involved in the transfer of the threonylcarbamoyl moiety of threonylcarbamoyl-AMP (TC-AMP) to the N6 group of A37, together with TsaE and TsaB. TsaD likely plays a direct catalytic role in this reaction.</text>
</comment>
<comment type="catalytic activity">
    <reaction evidence="1">
        <text>L-threonylcarbamoyladenylate + adenosine(37) in tRNA = N(6)-L-threonylcarbamoyladenosine(37) in tRNA + AMP + H(+)</text>
        <dbReference type="Rhea" id="RHEA:37059"/>
        <dbReference type="Rhea" id="RHEA-COMP:10162"/>
        <dbReference type="Rhea" id="RHEA-COMP:10163"/>
        <dbReference type="ChEBI" id="CHEBI:15378"/>
        <dbReference type="ChEBI" id="CHEBI:73682"/>
        <dbReference type="ChEBI" id="CHEBI:74411"/>
        <dbReference type="ChEBI" id="CHEBI:74418"/>
        <dbReference type="ChEBI" id="CHEBI:456215"/>
        <dbReference type="EC" id="2.3.1.234"/>
    </reaction>
</comment>
<comment type="cofactor">
    <cofactor evidence="1">
        <name>Fe(2+)</name>
        <dbReference type="ChEBI" id="CHEBI:29033"/>
    </cofactor>
    <text evidence="1">Binds 1 Fe(2+) ion per subunit.</text>
</comment>
<comment type="subcellular location">
    <subcellularLocation>
        <location evidence="1">Cytoplasm</location>
    </subcellularLocation>
</comment>
<comment type="similarity">
    <text evidence="1">Belongs to the KAE1 / TsaD family.</text>
</comment>
<sequence length="338" mass="36543">MRILGIETSCDETGVAIYDDEKGLLAHQLYSQVKLHADYGGVVPELASRDHVKKTIPLIKAALNDAGLTKDDIDGIAYTAGPGLVGALLVGSTIGRSIAYAWDVPAIPVHHMEGHLLAPMLEDEPPAFPFVALLVSGGHTMMVEVKGIGEYQILGESVDDAAGEAFDKTAKLMGLDYPGGPLLSKLAESGTKGRFKFPRPMTDRPGLDFSFSGLKTFAANTIRGNEDDLQTRADIAFAFQEAVVDTLAIKCRRALKQTGMKRLVMAGGVSANKYLRQELEVMMKKIGGEVYYPRTEFCTDNGAMIAYAGMQRLKNGETTDLAVQAKPRWPIDQLAPIK</sequence>
<organism>
    <name type="scientific">Aliivibrio fischeri (strain MJ11)</name>
    <name type="common">Vibrio fischeri</name>
    <dbReference type="NCBI Taxonomy" id="388396"/>
    <lineage>
        <taxon>Bacteria</taxon>
        <taxon>Pseudomonadati</taxon>
        <taxon>Pseudomonadota</taxon>
        <taxon>Gammaproteobacteria</taxon>
        <taxon>Vibrionales</taxon>
        <taxon>Vibrionaceae</taxon>
        <taxon>Aliivibrio</taxon>
    </lineage>
</organism>
<reference key="1">
    <citation type="submission" date="2008-08" db="EMBL/GenBank/DDBJ databases">
        <title>Complete sequence of Vibrio fischeri strain MJ11.</title>
        <authorList>
            <person name="Mandel M.J."/>
            <person name="Stabb E.V."/>
            <person name="Ruby E.G."/>
            <person name="Ferriera S."/>
            <person name="Johnson J."/>
            <person name="Kravitz S."/>
            <person name="Beeson K."/>
            <person name="Sutton G."/>
            <person name="Rogers Y.-H."/>
            <person name="Friedman R."/>
            <person name="Frazier M."/>
            <person name="Venter J.C."/>
        </authorList>
    </citation>
    <scope>NUCLEOTIDE SEQUENCE [LARGE SCALE GENOMIC DNA]</scope>
    <source>
        <strain>MJ11</strain>
    </source>
</reference>
<evidence type="ECO:0000255" key="1">
    <source>
        <dbReference type="HAMAP-Rule" id="MF_01445"/>
    </source>
</evidence>
<dbReference type="EC" id="2.3.1.234" evidence="1"/>
<dbReference type="EMBL" id="CP001139">
    <property type="protein sequence ID" value="ACH66893.1"/>
    <property type="molecule type" value="Genomic_DNA"/>
</dbReference>
<dbReference type="RefSeq" id="WP_005421023.1">
    <property type="nucleotide sequence ID" value="NC_011184.1"/>
</dbReference>
<dbReference type="SMR" id="B5FB82"/>
<dbReference type="KEGG" id="vfm:VFMJ11_2360"/>
<dbReference type="HOGENOM" id="CLU_023208_0_0_6"/>
<dbReference type="Proteomes" id="UP000001857">
    <property type="component" value="Chromosome I"/>
</dbReference>
<dbReference type="GO" id="GO:0005737">
    <property type="term" value="C:cytoplasm"/>
    <property type="evidence" value="ECO:0007669"/>
    <property type="project" value="UniProtKB-SubCell"/>
</dbReference>
<dbReference type="GO" id="GO:0005506">
    <property type="term" value="F:iron ion binding"/>
    <property type="evidence" value="ECO:0007669"/>
    <property type="project" value="UniProtKB-UniRule"/>
</dbReference>
<dbReference type="GO" id="GO:0061711">
    <property type="term" value="F:N(6)-L-threonylcarbamoyladenine synthase activity"/>
    <property type="evidence" value="ECO:0007669"/>
    <property type="project" value="UniProtKB-EC"/>
</dbReference>
<dbReference type="GO" id="GO:0002949">
    <property type="term" value="P:tRNA threonylcarbamoyladenosine modification"/>
    <property type="evidence" value="ECO:0007669"/>
    <property type="project" value="UniProtKB-UniRule"/>
</dbReference>
<dbReference type="CDD" id="cd24133">
    <property type="entry name" value="ASKHA_NBD_TsaD_bac"/>
    <property type="match status" value="1"/>
</dbReference>
<dbReference type="FunFam" id="3.30.420.40:FF:000031">
    <property type="entry name" value="tRNA N6-adenosine threonylcarbamoyltransferase"/>
    <property type="match status" value="1"/>
</dbReference>
<dbReference type="Gene3D" id="3.30.420.40">
    <property type="match status" value="2"/>
</dbReference>
<dbReference type="HAMAP" id="MF_01445">
    <property type="entry name" value="TsaD"/>
    <property type="match status" value="1"/>
</dbReference>
<dbReference type="InterPro" id="IPR043129">
    <property type="entry name" value="ATPase_NBD"/>
</dbReference>
<dbReference type="InterPro" id="IPR000905">
    <property type="entry name" value="Gcp-like_dom"/>
</dbReference>
<dbReference type="InterPro" id="IPR017861">
    <property type="entry name" value="KAE1/TsaD"/>
</dbReference>
<dbReference type="InterPro" id="IPR017860">
    <property type="entry name" value="Peptidase_M22_CS"/>
</dbReference>
<dbReference type="InterPro" id="IPR022450">
    <property type="entry name" value="TsaD"/>
</dbReference>
<dbReference type="NCBIfam" id="TIGR00329">
    <property type="entry name" value="gcp_kae1"/>
    <property type="match status" value="1"/>
</dbReference>
<dbReference type="NCBIfam" id="TIGR03723">
    <property type="entry name" value="T6A_TsaD_YgjD"/>
    <property type="match status" value="1"/>
</dbReference>
<dbReference type="PANTHER" id="PTHR11735">
    <property type="entry name" value="TRNA N6-ADENOSINE THREONYLCARBAMOYLTRANSFERASE"/>
    <property type="match status" value="1"/>
</dbReference>
<dbReference type="PANTHER" id="PTHR11735:SF6">
    <property type="entry name" value="TRNA N6-ADENOSINE THREONYLCARBAMOYLTRANSFERASE, MITOCHONDRIAL"/>
    <property type="match status" value="1"/>
</dbReference>
<dbReference type="Pfam" id="PF00814">
    <property type="entry name" value="TsaD"/>
    <property type="match status" value="1"/>
</dbReference>
<dbReference type="PRINTS" id="PR00789">
    <property type="entry name" value="OSIALOPTASE"/>
</dbReference>
<dbReference type="SUPFAM" id="SSF53067">
    <property type="entry name" value="Actin-like ATPase domain"/>
    <property type="match status" value="2"/>
</dbReference>
<dbReference type="PROSITE" id="PS01016">
    <property type="entry name" value="GLYCOPROTEASE"/>
    <property type="match status" value="1"/>
</dbReference>
<accession>B5FB82</accession>
<feature type="chain" id="PRO_1000146040" description="tRNA N6-adenosine threonylcarbamoyltransferase">
    <location>
        <begin position="1"/>
        <end position="338"/>
    </location>
</feature>
<feature type="binding site" evidence="1">
    <location>
        <position position="111"/>
    </location>
    <ligand>
        <name>Fe cation</name>
        <dbReference type="ChEBI" id="CHEBI:24875"/>
    </ligand>
</feature>
<feature type="binding site" evidence="1">
    <location>
        <position position="115"/>
    </location>
    <ligand>
        <name>Fe cation</name>
        <dbReference type="ChEBI" id="CHEBI:24875"/>
    </ligand>
</feature>
<feature type="binding site" evidence="1">
    <location>
        <begin position="134"/>
        <end position="138"/>
    </location>
    <ligand>
        <name>substrate</name>
    </ligand>
</feature>
<feature type="binding site" evidence="1">
    <location>
        <position position="167"/>
    </location>
    <ligand>
        <name>substrate</name>
    </ligand>
</feature>
<feature type="binding site" evidence="1">
    <location>
        <position position="180"/>
    </location>
    <ligand>
        <name>substrate</name>
    </ligand>
</feature>
<feature type="binding site" evidence="1">
    <location>
        <position position="272"/>
    </location>
    <ligand>
        <name>substrate</name>
    </ligand>
</feature>
<feature type="binding site" evidence="1">
    <location>
        <position position="300"/>
    </location>
    <ligand>
        <name>Fe cation</name>
        <dbReference type="ChEBI" id="CHEBI:24875"/>
    </ligand>
</feature>
<protein>
    <recommendedName>
        <fullName evidence="1">tRNA N6-adenosine threonylcarbamoyltransferase</fullName>
        <ecNumber evidence="1">2.3.1.234</ecNumber>
    </recommendedName>
    <alternativeName>
        <fullName evidence="1">N6-L-threonylcarbamoyladenine synthase</fullName>
        <shortName evidence="1">t(6)A synthase</shortName>
    </alternativeName>
    <alternativeName>
        <fullName evidence="1">t(6)A37 threonylcarbamoyladenosine biosynthesis protein TsaD</fullName>
    </alternativeName>
    <alternativeName>
        <fullName evidence="1">tRNA threonylcarbamoyladenosine biosynthesis protein TsaD</fullName>
    </alternativeName>
</protein>
<name>TSAD_ALIFM</name>
<gene>
    <name evidence="1" type="primary">tsaD</name>
    <name type="synonym">gcp</name>
    <name type="ordered locus">VFMJ11_2360</name>
</gene>
<proteinExistence type="inferred from homology"/>
<keyword id="KW-0012">Acyltransferase</keyword>
<keyword id="KW-0963">Cytoplasm</keyword>
<keyword id="KW-0408">Iron</keyword>
<keyword id="KW-0479">Metal-binding</keyword>
<keyword id="KW-0808">Transferase</keyword>
<keyword id="KW-0819">tRNA processing</keyword>